<organism>
    <name type="scientific">Crotalus durissus terrificus</name>
    <name type="common">South American rattlesnake</name>
    <dbReference type="NCBI Taxonomy" id="8732"/>
    <lineage>
        <taxon>Eukaryota</taxon>
        <taxon>Metazoa</taxon>
        <taxon>Chordata</taxon>
        <taxon>Craniata</taxon>
        <taxon>Vertebrata</taxon>
        <taxon>Euteleostomi</taxon>
        <taxon>Lepidosauria</taxon>
        <taxon>Squamata</taxon>
        <taxon>Bifurcata</taxon>
        <taxon>Unidentata</taxon>
        <taxon>Episquamata</taxon>
        <taxon>Toxicofera</taxon>
        <taxon>Serpentes</taxon>
        <taxon>Colubroidea</taxon>
        <taxon>Viperidae</taxon>
        <taxon>Crotalinae</taxon>
        <taxon>Crotalus</taxon>
    </lineage>
</organism>
<dbReference type="EMBL" id="EU421932">
    <property type="protein sequence ID" value="ABZ82349.1"/>
    <property type="molecule type" value="mRNA"/>
</dbReference>
<dbReference type="SMR" id="B1A4Q8"/>
<dbReference type="GO" id="GO:0005576">
    <property type="term" value="C:extracellular region"/>
    <property type="evidence" value="ECO:0007669"/>
    <property type="project" value="UniProtKB-SubCell"/>
</dbReference>
<dbReference type="GO" id="GO:0030246">
    <property type="term" value="F:carbohydrate binding"/>
    <property type="evidence" value="ECO:0007669"/>
    <property type="project" value="UniProtKB-KW"/>
</dbReference>
<dbReference type="GO" id="GO:0019834">
    <property type="term" value="F:phospholipase A2 inhibitor activity"/>
    <property type="evidence" value="ECO:0007669"/>
    <property type="project" value="UniProtKB-KW"/>
</dbReference>
<dbReference type="Gene3D" id="3.10.100.10">
    <property type="entry name" value="Mannose-Binding Protein A, subunit A"/>
    <property type="match status" value="1"/>
</dbReference>
<dbReference type="InterPro" id="IPR001304">
    <property type="entry name" value="C-type_lectin-like"/>
</dbReference>
<dbReference type="InterPro" id="IPR016186">
    <property type="entry name" value="C-type_lectin-like/link_sf"/>
</dbReference>
<dbReference type="InterPro" id="IPR016187">
    <property type="entry name" value="CTDL_fold"/>
</dbReference>
<dbReference type="Pfam" id="PF00059">
    <property type="entry name" value="Lectin_C"/>
    <property type="match status" value="1"/>
</dbReference>
<dbReference type="SUPFAM" id="SSF56436">
    <property type="entry name" value="C-type lectin-like"/>
    <property type="match status" value="1"/>
</dbReference>
<reference key="1">
    <citation type="submission" date="2008-01" db="EMBL/GenBank/DDBJ databases">
        <title>A profile of the phospholipase A2 inhibitors of the alpha class prospected in Brazilian Crotalidae snakes: structural and phylogenetic analysis.</title>
        <authorList>
            <person name="Estevao-Costa M.I."/>
            <person name="Costa M.A.F."/>
            <person name="Mudado M.A."/>
            <person name="Franco G.R."/>
            <person name="Fortes-Dias C.L."/>
        </authorList>
    </citation>
    <scope>NUCLEOTIDE SEQUENCE [MRNA]</scope>
    <source>
        <tissue>Liver</tissue>
    </source>
</reference>
<comment type="function">
    <text evidence="1">This phospholipase A2 inhibitor binds directly phospholipase A2 in the presence or absence of calcium.</text>
</comment>
<comment type="subunit">
    <text evidence="2">Homotrimer; non-covalently linked.</text>
</comment>
<comment type="subcellular location">
    <subcellularLocation>
        <location evidence="6">Secreted</location>
    </subcellularLocation>
    <text evidence="5">Secreted in plasma.</text>
</comment>
<comment type="tissue specificity">
    <text evidence="6">Expressed by the liver.</text>
</comment>
<comment type="similarity">
    <text evidence="5">Belongs to the alpha-type phospholipase A2 inhibitor family.</text>
</comment>
<proteinExistence type="evidence at transcript level"/>
<protein>
    <recommendedName>
        <fullName>Phospholipase A2 inhibitor B1</fullName>
        <shortName>alpha-PLI</shortName>
    </recommendedName>
</protein>
<feature type="signal peptide" evidence="1">
    <location>
        <begin position="1"/>
        <end position="19"/>
    </location>
</feature>
<feature type="chain" id="PRO_0000356350" description="Phospholipase A2 inhibitor B1">
    <location>
        <begin position="20"/>
        <end position="166"/>
    </location>
</feature>
<feature type="domain" description="C-type lectin">
    <location>
        <begin position="46"/>
        <end position="161"/>
    </location>
</feature>
<feature type="glycosylation site" description="N-linked (GlcNAc...) asparagine" evidence="4">
    <location>
        <position position="122"/>
    </location>
</feature>
<feature type="disulfide bond" evidence="3">
    <location>
        <begin position="83"/>
        <end position="160"/>
    </location>
</feature>
<feature type="disulfide bond" evidence="3">
    <location>
        <begin position="138"/>
        <end position="152"/>
    </location>
</feature>
<evidence type="ECO:0000250" key="1"/>
<evidence type="ECO:0000250" key="2">
    <source>
        <dbReference type="UniProtKB" id="A1XRN2"/>
    </source>
</evidence>
<evidence type="ECO:0000250" key="3">
    <source>
        <dbReference type="UniProtKB" id="P21755"/>
    </source>
</evidence>
<evidence type="ECO:0000255" key="4"/>
<evidence type="ECO:0000305" key="5"/>
<evidence type="ECO:0000305" key="6">
    <source ref="1"/>
</evidence>
<sequence>MRLILLSGLLLLGTFLVNGHDADPEGEVLNSVLLTLMKLQKEFTNLFHAFLTVHKARSFGSGSERLYVSNKEIKNFEALKVICKQAGGQIPSPQLENQNKAFANVLERHNKEAFLVVGDSGNFTNWAAGQPNKADGTCVKADKQGFCHSTSCDDNLLVVCEFYFIL</sequence>
<accession>B1A4Q8</accession>
<keyword id="KW-0106">Calcium</keyword>
<keyword id="KW-1015">Disulfide bond</keyword>
<keyword id="KW-0325">Glycoprotein</keyword>
<keyword id="KW-0430">Lectin</keyword>
<keyword id="KW-0593">Phospholipase A2 inhibitor</keyword>
<keyword id="KW-0964">Secreted</keyword>
<keyword id="KW-0732">Signal</keyword>
<name>PLIA1_CRODU</name>